<proteinExistence type="inferred from homology"/>
<accession>P27075</accession>
<sequence length="106" mass="12178">MVNIPKTRNTYCKGKGCRKHTIHKVTQYKAGRASLFAQGKRRYDRKQSGYGGQTKQVFHKKAKTTKKIVLKLECTVCKTKKQLPLKRCKHIELGGEKKQKGQALQF</sequence>
<dbReference type="EMBL" id="D10581">
    <property type="protein sequence ID" value="BAA01438.1"/>
    <property type="molecule type" value="Genomic_DNA"/>
</dbReference>
<dbReference type="EMBL" id="M62393">
    <property type="protein sequence ID" value="AAA34365.1"/>
    <property type="molecule type" value="Genomic_DNA"/>
</dbReference>
<dbReference type="PIR" id="D43301">
    <property type="entry name" value="D43301"/>
</dbReference>
<dbReference type="SMR" id="P27075"/>
<dbReference type="VEuPathDB" id="FungiDB:CTMYA2_004880"/>
<dbReference type="GO" id="GO:1990904">
    <property type="term" value="C:ribonucleoprotein complex"/>
    <property type="evidence" value="ECO:0007669"/>
    <property type="project" value="UniProtKB-KW"/>
</dbReference>
<dbReference type="GO" id="GO:0005840">
    <property type="term" value="C:ribosome"/>
    <property type="evidence" value="ECO:0007669"/>
    <property type="project" value="UniProtKB-KW"/>
</dbReference>
<dbReference type="GO" id="GO:0003735">
    <property type="term" value="F:structural constituent of ribosome"/>
    <property type="evidence" value="ECO:0007669"/>
    <property type="project" value="InterPro"/>
</dbReference>
<dbReference type="GO" id="GO:0046677">
    <property type="term" value="P:response to antibiotic"/>
    <property type="evidence" value="ECO:0007669"/>
    <property type="project" value="UniProtKB-KW"/>
</dbReference>
<dbReference type="GO" id="GO:0046898">
    <property type="term" value="P:response to cycloheximide"/>
    <property type="evidence" value="ECO:0007669"/>
    <property type="project" value="UniProtKB-KW"/>
</dbReference>
<dbReference type="GO" id="GO:0006412">
    <property type="term" value="P:translation"/>
    <property type="evidence" value="ECO:0007669"/>
    <property type="project" value="InterPro"/>
</dbReference>
<dbReference type="FunFam" id="3.10.450.80:FF:000001">
    <property type="entry name" value="60S ribosomal protein L44"/>
    <property type="match status" value="1"/>
</dbReference>
<dbReference type="Gene3D" id="3.10.450.80">
    <property type="match status" value="1"/>
</dbReference>
<dbReference type="InterPro" id="IPR000552">
    <property type="entry name" value="Ribosomal_eL44"/>
</dbReference>
<dbReference type="InterPro" id="IPR053708">
    <property type="entry name" value="Ribosomal_LSU_eL42"/>
</dbReference>
<dbReference type="InterPro" id="IPR011332">
    <property type="entry name" value="Ribosomal_zn-bd"/>
</dbReference>
<dbReference type="PANTHER" id="PTHR10369">
    <property type="entry name" value="60S RIBOSOMAL PROTEIN L36A/L44"/>
    <property type="match status" value="1"/>
</dbReference>
<dbReference type="Pfam" id="PF00935">
    <property type="entry name" value="Ribosomal_L44"/>
    <property type="match status" value="1"/>
</dbReference>
<dbReference type="SUPFAM" id="SSF57829">
    <property type="entry name" value="Zn-binding ribosomal proteins"/>
    <property type="match status" value="1"/>
</dbReference>
<dbReference type="PROSITE" id="PS01172">
    <property type="entry name" value="RIBOSOMAL_L44E"/>
    <property type="match status" value="1"/>
</dbReference>
<keyword id="KW-0046">Antibiotic resistance</keyword>
<keyword id="KW-0196">Cycloheximide resistance</keyword>
<keyword id="KW-0687">Ribonucleoprotein</keyword>
<keyword id="KW-0689">Ribosomal protein</keyword>
<name>RL44_CANTR</name>
<protein>
    <recommendedName>
        <fullName evidence="2">Large ribosomal subunit protein eL42</fullName>
    </recommendedName>
    <alternativeName>
        <fullName>60S ribosomal protein L41</fullName>
    </alternativeName>
    <alternativeName>
        <fullName>60S ribosomal protein L44</fullName>
    </alternativeName>
</protein>
<comment type="miscellaneous">
    <text>Confers resistance to cycloheximide, an inhibitor of polypeptide elongation.</text>
</comment>
<comment type="similarity">
    <text evidence="2">Belongs to the eukaryotic ribosomal protein eL42 family.</text>
</comment>
<organism>
    <name type="scientific">Candida tropicalis</name>
    <name type="common">Yeast</name>
    <dbReference type="NCBI Taxonomy" id="5482"/>
    <lineage>
        <taxon>Eukaryota</taxon>
        <taxon>Fungi</taxon>
        <taxon>Dikarya</taxon>
        <taxon>Ascomycota</taxon>
        <taxon>Saccharomycotina</taxon>
        <taxon>Pichiomycetes</taxon>
        <taxon>Debaryomycetaceae</taxon>
        <taxon>Candida/Lodderomyces clade</taxon>
        <taxon>Candida</taxon>
    </lineage>
</organism>
<evidence type="ECO:0000250" key="1"/>
<evidence type="ECO:0000305" key="2"/>
<gene>
    <name type="primary">RPL44</name>
    <name type="synonym">CTL41</name>
    <name type="synonym">RIM-C</name>
    <name type="synonym">RPL41</name>
</gene>
<reference key="1">
    <citation type="journal article" date="1992" name="J. Bacteriol.">
        <title>Drastic alteration of cycloheximide sensitivity by substitution of one amino acid in the L41 ribosomal protein of yeasts.</title>
        <authorList>
            <person name="Kawai S."/>
            <person name="Murao S."/>
            <person name="Mochizuki M."/>
            <person name="Shibuya I."/>
            <person name="Yano K."/>
            <person name="Takagi M."/>
        </authorList>
    </citation>
    <scope>NUCLEOTIDE SEQUENCE [GENOMIC DNA]</scope>
    <source>
        <strain>N7Y1</strain>
    </source>
</reference>
<feature type="initiator methionine" description="Removed" evidence="1">
    <location>
        <position position="1"/>
    </location>
</feature>
<feature type="chain" id="PRO_0000149136" description="Large ribosomal subunit protein eL42">
    <location>
        <begin position="2"/>
        <end position="106"/>
    </location>
</feature>